<organism>
    <name type="scientific">Sicarius cf. damarensis (strain GJB-2008)</name>
    <name type="common">Six-eyed sand spider</name>
    <dbReference type="NCBI Taxonomy" id="575956"/>
    <lineage>
        <taxon>Eukaryota</taxon>
        <taxon>Metazoa</taxon>
        <taxon>Ecdysozoa</taxon>
        <taxon>Arthropoda</taxon>
        <taxon>Chelicerata</taxon>
        <taxon>Arachnida</taxon>
        <taxon>Araneae</taxon>
        <taxon>Araneomorphae</taxon>
        <taxon>Haplogynae</taxon>
        <taxon>Scytodoidea</taxon>
        <taxon>Sicariidae</taxon>
        <taxon>Sicarius</taxon>
    </lineage>
</organism>
<protein>
    <recommendedName>
        <fullName evidence="6">Dermonecrotic toxin SdSicTox-betaIIB1biii</fullName>
        <ecNumber evidence="4">4.6.1.-</ecNumber>
    </recommendedName>
    <alternativeName>
        <fullName>Phospholipase D</fullName>
        <shortName>PLD</shortName>
    </alternativeName>
    <alternativeName>
        <fullName>Sphingomyelin phosphodiesterase D</fullName>
        <shortName>SMD</shortName>
        <shortName>SMase D</shortName>
        <shortName>Sphingomyelinase D</shortName>
    </alternativeName>
</protein>
<sequence>WIMGHMVNAIEQVDEFLNLGANAIEFDIDFDKDGIAQITHHGIPCDCGRKCTKKAIFTECLDNIRQVTTPDDPKFREQLVLLALDLKLQRISSAKAYRAGEDVAKKLLDHYWQRGNSRARAYILLNIPLVEDYEFIRAFKDTLKNEGYESYNDKVGINFTGNEDLDKIRDVLEILGIHKQVWQADGITSCFARGTERLKEALEKRDTPGYNYINKVYAWTLVRKSIMRRSLRLGVDGVMSNNPDRVIKVLKEKEFADKFRLATYNDNPWEKFRG</sequence>
<reference key="1">
    <citation type="journal article" date="2009" name="Mol. Biol. Evol.">
        <title>Molecular evolution, functional variation, and proposed nomenclature of the gene family that includes sphingomyelinase D in sicariid spider venoms.</title>
        <authorList>
            <person name="Binford G.J."/>
            <person name="Bodner M.R."/>
            <person name="Cordes M.H."/>
            <person name="Baldwin K.L."/>
            <person name="Rynerson M.R."/>
            <person name="Burns S.N."/>
            <person name="Zobel-Thropp P.A."/>
        </authorList>
    </citation>
    <scope>NUCLEOTIDE SEQUENCE [MRNA]</scope>
    <scope>NOMENCLATURE</scope>
    <source>
        <tissue>Venom gland</tissue>
    </source>
</reference>
<evidence type="ECO:0000250" key="1">
    <source>
        <dbReference type="UniProtKB" id="A0A0D4WTV1"/>
    </source>
</evidence>
<evidence type="ECO:0000250" key="2">
    <source>
        <dbReference type="UniProtKB" id="A0A0D4WV12"/>
    </source>
</evidence>
<evidence type="ECO:0000250" key="3">
    <source>
        <dbReference type="UniProtKB" id="P0CE80"/>
    </source>
</evidence>
<evidence type="ECO:0000250" key="4">
    <source>
        <dbReference type="UniProtKB" id="Q4ZFU2"/>
    </source>
</evidence>
<evidence type="ECO:0000250" key="5">
    <source>
        <dbReference type="UniProtKB" id="Q8I914"/>
    </source>
</evidence>
<evidence type="ECO:0000303" key="6">
    <source>
    </source>
</evidence>
<evidence type="ECO:0000305" key="7"/>
<evidence type="ECO:0000305" key="8">
    <source>
    </source>
</evidence>
<feature type="chain" id="PRO_0000392888" description="Dermonecrotic toxin SdSicTox-betaIIB1biii">
    <location>
        <begin position="1" status="less than"/>
        <end position="274"/>
    </location>
</feature>
<feature type="active site" evidence="5">
    <location>
        <position position="5"/>
    </location>
</feature>
<feature type="active site" description="Nucleophile" evidence="5">
    <location>
        <position position="41"/>
    </location>
</feature>
<feature type="binding site" evidence="5">
    <location>
        <position position="25"/>
    </location>
    <ligand>
        <name>Mg(2+)</name>
        <dbReference type="ChEBI" id="CHEBI:18420"/>
    </ligand>
</feature>
<feature type="binding site" evidence="5">
    <location>
        <position position="27"/>
    </location>
    <ligand>
        <name>Mg(2+)</name>
        <dbReference type="ChEBI" id="CHEBI:18420"/>
    </ligand>
</feature>
<feature type="binding site" evidence="5">
    <location>
        <position position="85"/>
    </location>
    <ligand>
        <name>Mg(2+)</name>
        <dbReference type="ChEBI" id="CHEBI:18420"/>
    </ligand>
</feature>
<feature type="disulfide bond" evidence="3">
    <location>
        <begin position="45"/>
        <end position="51"/>
    </location>
</feature>
<feature type="disulfide bond" evidence="3">
    <location>
        <begin position="47"/>
        <end position="190"/>
    </location>
</feature>
<feature type="non-terminal residue">
    <location>
        <position position="1"/>
    </location>
</feature>
<comment type="function">
    <text evidence="1 3">Dermonecrotic toxins cleave the phosphodiester linkage between the phosphate and headgroup of certain phospholipids (sphingolipid and lysolipid substrates), forming an alcohol (often choline) and a cyclic phosphate (By similarity). This toxin acts on sphingomyelin (SM) (By similarity). It may also act on ceramide phosphoethanolamine (CPE), lysophosphatidylcholine (LPC) and lysophosphatidylethanolamine (LPE), but not on lysophosphatidylserine (LPS), and lysophosphatidylglycerol (LPG) (By similarity). It acts by transphosphatidylation, releasing exclusively cyclic phosphate products as second products (By similarity). Induces dermonecrosis, hemolysis, increased vascular permeability, edema, inflammatory response, and platelet aggregation (By similarity).</text>
</comment>
<comment type="catalytic activity">
    <reaction evidence="1">
        <text>an N-(acyl)-sphingosylphosphocholine = an N-(acyl)-sphingosyl-1,3-cyclic phosphate + choline</text>
        <dbReference type="Rhea" id="RHEA:60652"/>
        <dbReference type="ChEBI" id="CHEBI:15354"/>
        <dbReference type="ChEBI" id="CHEBI:64583"/>
        <dbReference type="ChEBI" id="CHEBI:143892"/>
    </reaction>
</comment>
<comment type="catalytic activity">
    <reaction evidence="1">
        <text>an N-(acyl)-sphingosylphosphoethanolamine = an N-(acyl)-sphingosyl-1,3-cyclic phosphate + ethanolamine</text>
        <dbReference type="Rhea" id="RHEA:60648"/>
        <dbReference type="ChEBI" id="CHEBI:57603"/>
        <dbReference type="ChEBI" id="CHEBI:143891"/>
        <dbReference type="ChEBI" id="CHEBI:143892"/>
    </reaction>
</comment>
<comment type="catalytic activity">
    <reaction evidence="1">
        <text>a 1-acyl-sn-glycero-3-phosphocholine = a 1-acyl-sn-glycero-2,3-cyclic phosphate + choline</text>
        <dbReference type="Rhea" id="RHEA:60700"/>
        <dbReference type="ChEBI" id="CHEBI:15354"/>
        <dbReference type="ChEBI" id="CHEBI:58168"/>
        <dbReference type="ChEBI" id="CHEBI:143947"/>
    </reaction>
</comment>
<comment type="catalytic activity">
    <reaction evidence="1">
        <text>a 1-acyl-sn-glycero-3-phosphoethanolamine = a 1-acyl-sn-glycero-2,3-cyclic phosphate + ethanolamine</text>
        <dbReference type="Rhea" id="RHEA:60704"/>
        <dbReference type="ChEBI" id="CHEBI:57603"/>
        <dbReference type="ChEBI" id="CHEBI:64381"/>
        <dbReference type="ChEBI" id="CHEBI:143947"/>
    </reaction>
</comment>
<comment type="cofactor">
    <cofactor evidence="5">
        <name>Mg(2+)</name>
        <dbReference type="ChEBI" id="CHEBI:18420"/>
    </cofactor>
    <text evidence="5">Binds 1 Mg(2+) ion per subunit.</text>
</comment>
<comment type="subcellular location">
    <subcellularLocation>
        <location evidence="8">Secreted</location>
    </subcellularLocation>
</comment>
<comment type="tissue specificity">
    <text evidence="8">Expressed by the venom gland.</text>
</comment>
<comment type="similarity">
    <text evidence="7">Belongs to the arthropod phospholipase D family. Class II subfamily.</text>
</comment>
<comment type="caution">
    <text evidence="1 2 4">The most common activity assay for dermonecrotic toxins detects enzymatic activity by monitoring choline release from substrate. Liberation of choline from sphingomyelin (SM) or lysophosphatidylcholine (LPC) is commonly assumed to result from substrate hydrolysis, giving either ceramide-1-phosphate (C1P) or lysophosphatidic acid (LPA), respectively, as a second product. However, two studies from Lajoie and colleagues (2013 and 2015) report the observation of exclusive formation of cyclic phosphate products as second products, resulting from intramolecular transphosphatidylation. Cyclic phosphates have vastly different biological properties from their monoester counterparts, and they may be relevant to the pathology of brown spider envenomation.</text>
</comment>
<accession>C0JB73</accession>
<keyword id="KW-0204">Cytolysis</keyword>
<keyword id="KW-1061">Dermonecrotic toxin</keyword>
<keyword id="KW-1015">Disulfide bond</keyword>
<keyword id="KW-0354">Hemolysis</keyword>
<keyword id="KW-0442">Lipid degradation</keyword>
<keyword id="KW-0443">Lipid metabolism</keyword>
<keyword id="KW-0456">Lyase</keyword>
<keyword id="KW-0460">Magnesium</keyword>
<keyword id="KW-0479">Metal-binding</keyword>
<keyword id="KW-0964">Secreted</keyword>
<keyword id="KW-0800">Toxin</keyword>
<dbReference type="EC" id="4.6.1.-" evidence="4"/>
<dbReference type="EMBL" id="FJ171508">
    <property type="protein sequence ID" value="ACN49004.1"/>
    <property type="molecule type" value="mRNA"/>
</dbReference>
<dbReference type="SMR" id="C0JB73"/>
<dbReference type="GO" id="GO:0005576">
    <property type="term" value="C:extracellular region"/>
    <property type="evidence" value="ECO:0007669"/>
    <property type="project" value="UniProtKB-SubCell"/>
</dbReference>
<dbReference type="GO" id="GO:0016829">
    <property type="term" value="F:lyase activity"/>
    <property type="evidence" value="ECO:0007669"/>
    <property type="project" value="UniProtKB-KW"/>
</dbReference>
<dbReference type="GO" id="GO:0046872">
    <property type="term" value="F:metal ion binding"/>
    <property type="evidence" value="ECO:0007669"/>
    <property type="project" value="UniProtKB-KW"/>
</dbReference>
<dbReference type="GO" id="GO:0008081">
    <property type="term" value="F:phosphoric diester hydrolase activity"/>
    <property type="evidence" value="ECO:0007669"/>
    <property type="project" value="InterPro"/>
</dbReference>
<dbReference type="GO" id="GO:0090729">
    <property type="term" value="F:toxin activity"/>
    <property type="evidence" value="ECO:0007669"/>
    <property type="project" value="UniProtKB-KW"/>
</dbReference>
<dbReference type="GO" id="GO:0031640">
    <property type="term" value="P:killing of cells of another organism"/>
    <property type="evidence" value="ECO:0007669"/>
    <property type="project" value="UniProtKB-KW"/>
</dbReference>
<dbReference type="GO" id="GO:0016042">
    <property type="term" value="P:lipid catabolic process"/>
    <property type="evidence" value="ECO:0007669"/>
    <property type="project" value="UniProtKB-KW"/>
</dbReference>
<dbReference type="CDD" id="cd08576">
    <property type="entry name" value="GDPD_like_SMaseD_PLD"/>
    <property type="match status" value="1"/>
</dbReference>
<dbReference type="Gene3D" id="3.20.20.190">
    <property type="entry name" value="Phosphatidylinositol (PI) phosphodiesterase"/>
    <property type="match status" value="1"/>
</dbReference>
<dbReference type="InterPro" id="IPR017946">
    <property type="entry name" value="PLC-like_Pdiesterase_TIM-brl"/>
</dbReference>
<dbReference type="SUPFAM" id="SSF51695">
    <property type="entry name" value="PLC-like phosphodiesterases"/>
    <property type="match status" value="1"/>
</dbReference>
<proteinExistence type="evidence at transcript level"/>
<name>B2KB3_SICCD</name>